<gene>
    <name evidence="1" type="primary">acpS</name>
    <name type="ordered locus">BCI_0278</name>
</gene>
<protein>
    <recommendedName>
        <fullName evidence="1">Holo-[acyl-carrier-protein] synthase</fullName>
        <shortName evidence="1">Holo-ACP synthase</shortName>
        <ecNumber evidence="1">2.7.8.7</ecNumber>
    </recommendedName>
    <alternativeName>
        <fullName evidence="1">4'-phosphopantetheinyl transferase AcpS</fullName>
    </alternativeName>
</protein>
<comment type="function">
    <text evidence="1">Transfers the 4'-phosphopantetheine moiety from coenzyme A to a Ser of acyl-carrier-protein.</text>
</comment>
<comment type="catalytic activity">
    <reaction evidence="1">
        <text>apo-[ACP] + CoA = holo-[ACP] + adenosine 3',5'-bisphosphate + H(+)</text>
        <dbReference type="Rhea" id="RHEA:12068"/>
        <dbReference type="Rhea" id="RHEA-COMP:9685"/>
        <dbReference type="Rhea" id="RHEA-COMP:9690"/>
        <dbReference type="ChEBI" id="CHEBI:15378"/>
        <dbReference type="ChEBI" id="CHEBI:29999"/>
        <dbReference type="ChEBI" id="CHEBI:57287"/>
        <dbReference type="ChEBI" id="CHEBI:58343"/>
        <dbReference type="ChEBI" id="CHEBI:64479"/>
        <dbReference type="EC" id="2.7.8.7"/>
    </reaction>
</comment>
<comment type="cofactor">
    <cofactor evidence="1">
        <name>Mg(2+)</name>
        <dbReference type="ChEBI" id="CHEBI:18420"/>
    </cofactor>
</comment>
<comment type="subcellular location">
    <subcellularLocation>
        <location evidence="1">Cytoplasm</location>
    </subcellularLocation>
</comment>
<comment type="similarity">
    <text evidence="1">Belongs to the P-Pant transferase superfamily. AcpS family.</text>
</comment>
<accession>Q1LTI6</accession>
<reference key="1">
    <citation type="journal article" date="2006" name="PLoS Biol.">
        <title>Metabolic complementarity and genomics of the dual bacterial symbiosis of sharpshooters.</title>
        <authorList>
            <person name="Wu D."/>
            <person name="Daugherty S.C."/>
            <person name="Van Aken S.E."/>
            <person name="Pai G.H."/>
            <person name="Watkins K.L."/>
            <person name="Khouri H."/>
            <person name="Tallon L.J."/>
            <person name="Zaborsky J.M."/>
            <person name="Dunbar H.E."/>
            <person name="Tran P.L."/>
            <person name="Moran N.A."/>
            <person name="Eisen J.A."/>
        </authorList>
    </citation>
    <scope>NUCLEOTIDE SEQUENCE [LARGE SCALE GENOMIC DNA]</scope>
</reference>
<feature type="chain" id="PRO_1000008388" description="Holo-[acyl-carrier-protein] synthase">
    <location>
        <begin position="1"/>
        <end position="146"/>
    </location>
</feature>
<feature type="binding site" evidence="1">
    <location>
        <position position="9"/>
    </location>
    <ligand>
        <name>Mg(2+)</name>
        <dbReference type="ChEBI" id="CHEBI:18420"/>
    </ligand>
</feature>
<feature type="binding site" evidence="1">
    <location>
        <position position="58"/>
    </location>
    <ligand>
        <name>Mg(2+)</name>
        <dbReference type="ChEBI" id="CHEBI:18420"/>
    </ligand>
</feature>
<name>ACPS_BAUCH</name>
<keyword id="KW-0963">Cytoplasm</keyword>
<keyword id="KW-0275">Fatty acid biosynthesis</keyword>
<keyword id="KW-0276">Fatty acid metabolism</keyword>
<keyword id="KW-0444">Lipid biosynthesis</keyword>
<keyword id="KW-0443">Lipid metabolism</keyword>
<keyword id="KW-0460">Magnesium</keyword>
<keyword id="KW-0479">Metal-binding</keyword>
<keyword id="KW-1185">Reference proteome</keyword>
<keyword id="KW-0808">Transferase</keyword>
<sequence length="146" mass="16865">MAILGIGTDIVEIARIHTVLVRCGERFIDRILSPIEYKQYHQQNNSVHFLAKRFAVKEAAAKALGTGICHGIAFVQFELFHDERGKPQLRLHEQAAQLARERHITRMHVTLADERYYTCAMVIFEGDIRSNDYSIQPNWYLSKIKP</sequence>
<proteinExistence type="inferred from homology"/>
<dbReference type="EC" id="2.7.8.7" evidence="1"/>
<dbReference type="EMBL" id="CP000238">
    <property type="protein sequence ID" value="ABF14256.1"/>
    <property type="molecule type" value="Genomic_DNA"/>
</dbReference>
<dbReference type="SMR" id="Q1LTI6"/>
<dbReference type="STRING" id="374463.BCI_0278"/>
<dbReference type="KEGG" id="bci:BCI_0278"/>
<dbReference type="HOGENOM" id="CLU_089696_3_1_6"/>
<dbReference type="OrthoDB" id="517356at2"/>
<dbReference type="Proteomes" id="UP000002427">
    <property type="component" value="Chromosome"/>
</dbReference>
<dbReference type="GO" id="GO:0005737">
    <property type="term" value="C:cytoplasm"/>
    <property type="evidence" value="ECO:0007669"/>
    <property type="project" value="UniProtKB-SubCell"/>
</dbReference>
<dbReference type="GO" id="GO:0008897">
    <property type="term" value="F:holo-[acyl-carrier-protein] synthase activity"/>
    <property type="evidence" value="ECO:0007669"/>
    <property type="project" value="UniProtKB-UniRule"/>
</dbReference>
<dbReference type="GO" id="GO:0000287">
    <property type="term" value="F:magnesium ion binding"/>
    <property type="evidence" value="ECO:0007669"/>
    <property type="project" value="UniProtKB-UniRule"/>
</dbReference>
<dbReference type="GO" id="GO:0006633">
    <property type="term" value="P:fatty acid biosynthetic process"/>
    <property type="evidence" value="ECO:0007669"/>
    <property type="project" value="UniProtKB-UniRule"/>
</dbReference>
<dbReference type="FunFam" id="3.90.470.20:FF:000001">
    <property type="entry name" value="Holo-[acyl-carrier-protein] synthase"/>
    <property type="match status" value="1"/>
</dbReference>
<dbReference type="Gene3D" id="3.90.470.20">
    <property type="entry name" value="4'-phosphopantetheinyl transferase domain"/>
    <property type="match status" value="1"/>
</dbReference>
<dbReference type="HAMAP" id="MF_00101">
    <property type="entry name" value="AcpS"/>
    <property type="match status" value="1"/>
</dbReference>
<dbReference type="InterPro" id="IPR008278">
    <property type="entry name" value="4-PPantetheinyl_Trfase_dom"/>
</dbReference>
<dbReference type="InterPro" id="IPR037143">
    <property type="entry name" value="4-PPantetheinyl_Trfase_dom_sf"/>
</dbReference>
<dbReference type="InterPro" id="IPR002582">
    <property type="entry name" value="ACPS"/>
</dbReference>
<dbReference type="InterPro" id="IPR004568">
    <property type="entry name" value="Ppantetheine-prot_Trfase_dom"/>
</dbReference>
<dbReference type="NCBIfam" id="TIGR00516">
    <property type="entry name" value="acpS"/>
    <property type="match status" value="1"/>
</dbReference>
<dbReference type="NCBIfam" id="TIGR00556">
    <property type="entry name" value="pantethn_trn"/>
    <property type="match status" value="1"/>
</dbReference>
<dbReference type="Pfam" id="PF01648">
    <property type="entry name" value="ACPS"/>
    <property type="match status" value="1"/>
</dbReference>
<dbReference type="SUPFAM" id="SSF56214">
    <property type="entry name" value="4'-phosphopantetheinyl transferase"/>
    <property type="match status" value="1"/>
</dbReference>
<organism>
    <name type="scientific">Baumannia cicadellinicola subsp. Homalodisca coagulata</name>
    <dbReference type="NCBI Taxonomy" id="374463"/>
    <lineage>
        <taxon>Bacteria</taxon>
        <taxon>Pseudomonadati</taxon>
        <taxon>Pseudomonadota</taxon>
        <taxon>Gammaproteobacteria</taxon>
        <taxon>Candidatus Palibaumannia</taxon>
    </lineage>
</organism>
<evidence type="ECO:0000255" key="1">
    <source>
        <dbReference type="HAMAP-Rule" id="MF_00101"/>
    </source>
</evidence>